<name>VTPX_TTV1K</name>
<reference key="1">
    <citation type="journal article" date="1990" name="Nucleic Acids Res.">
        <title>The TTV1-encoded viral protein TPX: primary structure of the gene and the protein.</title>
        <authorList>
            <person name="Neumann H."/>
            <person name="Zillig W."/>
        </authorList>
    </citation>
    <scope>NUCLEOTIDE SEQUENCE [GENOMIC DNA]</scope>
</reference>
<proteinExistence type="predicted"/>
<accession>P19274</accession>
<dbReference type="EMBL" id="X14855">
    <property type="protein sequence ID" value="CAA33002.1"/>
    <property type="molecule type" value="Genomic_DNA"/>
</dbReference>
<dbReference type="PIR" id="S12850">
    <property type="entry name" value="S12850"/>
</dbReference>
<dbReference type="Proteomes" id="UP000009250">
    <property type="component" value="Genome"/>
</dbReference>
<feature type="chain" id="PRO_0000222957" description="Viral protein TPX">
    <location>
        <begin position="1"/>
        <end position="360"/>
    </location>
</feature>
<feature type="repeat" description="Thr-Pro(N)">
    <location>
        <begin position="270"/>
        <end position="291"/>
    </location>
</feature>
<feature type="repeat">
    <location>
        <begin position="292"/>
        <end position="301"/>
    </location>
</feature>
<feature type="repeat" description="Thr-Pro(N)">
    <location>
        <begin position="302"/>
        <end position="322"/>
    </location>
</feature>
<feature type="repeat">
    <location>
        <begin position="323"/>
        <end position="332"/>
    </location>
</feature>
<feature type="repeat" description="Thr-Pro(N)">
    <location>
        <begin position="333"/>
        <end position="353"/>
    </location>
</feature>
<feature type="region of interest" description="Disordered" evidence="1">
    <location>
        <begin position="269"/>
        <end position="289"/>
    </location>
</feature>
<feature type="region of interest" description="3 Thr-Pro repeats regions and two near identical repeats">
    <location>
        <begin position="278"/>
        <end position="353"/>
    </location>
</feature>
<feature type="region of interest" description="Disordered" evidence="1">
    <location>
        <begin position="332"/>
        <end position="360"/>
    </location>
</feature>
<feature type="compositionally biased region" description="Pro residues" evidence="1">
    <location>
        <begin position="275"/>
        <end position="289"/>
    </location>
</feature>
<feature type="compositionally biased region" description="Pro residues" evidence="1">
    <location>
        <begin position="335"/>
        <end position="351"/>
    </location>
</feature>
<keyword id="KW-1185">Reference proteome</keyword>
<keyword id="KW-0677">Repeat</keyword>
<organismHost>
    <name type="scientific">Thermoproteus tenax</name>
    <dbReference type="NCBI Taxonomy" id="2271"/>
</organismHost>
<organism>
    <name type="scientific">Thermoproteus tenax virus 1 (strain KRA1)</name>
    <name type="common">TTV1</name>
    <dbReference type="NCBI Taxonomy" id="10480"/>
    <lineage>
        <taxon>Viruses</taxon>
        <taxon>Adnaviria</taxon>
        <taxon>Zilligvirae</taxon>
        <taxon>Taleaviricota</taxon>
        <taxon>Tokiviricetes</taxon>
        <taxon>Primavirales</taxon>
        <taxon>Tristromaviridae</taxon>
        <taxon>Betatristromavirus</taxon>
        <taxon>Betatristromavirus TTV1</taxon>
    </lineage>
</organism>
<sequence length="360" mass="38215">MSYQITINNNTTSNVQNIVIADPNLASLGENVVFSDSQGPLSSLYVYDGVWVVKLRSPLSPGQSITITASSGTPNIDPTIALYYNNGSSYSNLTLVGSPTVSIVQDFGGYAISAYASGDFFLVASPTGFTPSSSRLLVVDRWATTPTSLDAVGLRLYADTNDWFGVVRKYINGAQNVSIEQKISGTYSVVNEIDISQFAAFTDPLVMYLSINGSTANVKVYKQGSNIGTVSGNYSTTPYGNPSMAGYGTVDKHYANFIVLPYEPDPQVTVTPISSPSPTPTPTPTPTPTPTYDITYVVFDVTPSPTPTPTLTSTPTPTPTPTYDITYVIFDVTPSPTPTPTPTPTPTPTPTPTSTTSSNI</sequence>
<evidence type="ECO:0000256" key="1">
    <source>
        <dbReference type="SAM" id="MobiDB-lite"/>
    </source>
</evidence>
<protein>
    <recommendedName>
        <fullName>Viral protein TPX</fullName>
    </recommendedName>
</protein>